<protein>
    <recommendedName>
        <fullName evidence="1">Phosphatidylglycerol--prolipoprotein diacylglyceryl transferase</fullName>
        <ecNumber evidence="1">2.5.1.145</ecNumber>
    </recommendedName>
</protein>
<sequence>MNPVAFEIFGLEIRWYGILICMGIILAYGLAYKRSKIYNIDFDKLTDVFIVALPFSILCARLYYVIFNWSYYGANPSHILYIREGGLAIHGGLIGAVISGYLMSRYRKLNFLDLIDTVAPCFILAQAIGRWGNFFNSEAHGGIVSYEFISHFPKFIQNGMYIDGFYYHPTFLYESIWNIVVLIILLLITRKHLAKGSIFYLYLIFYSLGRFFIEGLRTDSLMLGSLRMAQVISLVFIILGIILIIKSNIKNKSTFKQ</sequence>
<dbReference type="EC" id="2.5.1.145" evidence="1"/>
<dbReference type="EMBL" id="CP000382">
    <property type="protein sequence ID" value="ABK61940.1"/>
    <property type="molecule type" value="Genomic_DNA"/>
</dbReference>
<dbReference type="RefSeq" id="WP_011722641.1">
    <property type="nucleotide sequence ID" value="NC_008593.1"/>
</dbReference>
<dbReference type="SMR" id="A0Q200"/>
<dbReference type="STRING" id="386415.NT01CX_0143"/>
<dbReference type="KEGG" id="cno:NT01CX_0143"/>
<dbReference type="eggNOG" id="COG0682">
    <property type="taxonomic scope" value="Bacteria"/>
</dbReference>
<dbReference type="HOGENOM" id="CLU_013386_0_1_9"/>
<dbReference type="UniPathway" id="UPA00664"/>
<dbReference type="Proteomes" id="UP000008220">
    <property type="component" value="Chromosome"/>
</dbReference>
<dbReference type="GO" id="GO:0005886">
    <property type="term" value="C:plasma membrane"/>
    <property type="evidence" value="ECO:0007669"/>
    <property type="project" value="UniProtKB-SubCell"/>
</dbReference>
<dbReference type="GO" id="GO:0008961">
    <property type="term" value="F:phosphatidylglycerol-prolipoprotein diacylglyceryl transferase activity"/>
    <property type="evidence" value="ECO:0007669"/>
    <property type="project" value="UniProtKB-UniRule"/>
</dbReference>
<dbReference type="GO" id="GO:0042158">
    <property type="term" value="P:lipoprotein biosynthetic process"/>
    <property type="evidence" value="ECO:0007669"/>
    <property type="project" value="UniProtKB-UniRule"/>
</dbReference>
<dbReference type="HAMAP" id="MF_01147">
    <property type="entry name" value="Lgt"/>
    <property type="match status" value="1"/>
</dbReference>
<dbReference type="InterPro" id="IPR001640">
    <property type="entry name" value="Lgt"/>
</dbReference>
<dbReference type="NCBIfam" id="TIGR00544">
    <property type="entry name" value="lgt"/>
    <property type="match status" value="1"/>
</dbReference>
<dbReference type="PANTHER" id="PTHR30589:SF0">
    <property type="entry name" value="PHOSPHATIDYLGLYCEROL--PROLIPOPROTEIN DIACYLGLYCERYL TRANSFERASE"/>
    <property type="match status" value="1"/>
</dbReference>
<dbReference type="PANTHER" id="PTHR30589">
    <property type="entry name" value="PROLIPOPROTEIN DIACYLGLYCERYL TRANSFERASE"/>
    <property type="match status" value="1"/>
</dbReference>
<dbReference type="Pfam" id="PF01790">
    <property type="entry name" value="LGT"/>
    <property type="match status" value="1"/>
</dbReference>
<dbReference type="PROSITE" id="PS01311">
    <property type="entry name" value="LGT"/>
    <property type="match status" value="1"/>
</dbReference>
<keyword id="KW-1003">Cell membrane</keyword>
<keyword id="KW-0472">Membrane</keyword>
<keyword id="KW-1185">Reference proteome</keyword>
<keyword id="KW-0808">Transferase</keyword>
<keyword id="KW-0812">Transmembrane</keyword>
<keyword id="KW-1133">Transmembrane helix</keyword>
<gene>
    <name evidence="1" type="primary">lgt</name>
    <name type="ordered locus">NT01CX_0143</name>
</gene>
<reference key="1">
    <citation type="journal article" date="2006" name="Nat. Biotechnol.">
        <title>The genome and transcriptomes of the anti-tumor agent Clostridium novyi-NT.</title>
        <authorList>
            <person name="Bettegowda C."/>
            <person name="Huang X."/>
            <person name="Lin J."/>
            <person name="Cheong I."/>
            <person name="Kohli M."/>
            <person name="Szabo S.A."/>
            <person name="Zhang X."/>
            <person name="Diaz L.A. Jr."/>
            <person name="Velculescu V.E."/>
            <person name="Parmigiani G."/>
            <person name="Kinzler K.W."/>
            <person name="Vogelstein B."/>
            <person name="Zhou S."/>
        </authorList>
    </citation>
    <scope>NUCLEOTIDE SEQUENCE [LARGE SCALE GENOMIC DNA]</scope>
    <source>
        <strain>NT</strain>
    </source>
</reference>
<accession>A0Q200</accession>
<feature type="chain" id="PRO_1000053419" description="Phosphatidylglycerol--prolipoprotein diacylglyceryl transferase">
    <location>
        <begin position="1"/>
        <end position="257"/>
    </location>
</feature>
<feature type="transmembrane region" description="Helical" evidence="1">
    <location>
        <begin position="8"/>
        <end position="28"/>
    </location>
</feature>
<feature type="transmembrane region" description="Helical" evidence="1">
    <location>
        <begin position="48"/>
        <end position="68"/>
    </location>
</feature>
<feature type="transmembrane region" description="Helical" evidence="1">
    <location>
        <begin position="84"/>
        <end position="104"/>
    </location>
</feature>
<feature type="transmembrane region" description="Helical" evidence="1">
    <location>
        <begin position="109"/>
        <end position="129"/>
    </location>
</feature>
<feature type="transmembrane region" description="Helical" evidence="1">
    <location>
        <begin position="169"/>
        <end position="189"/>
    </location>
</feature>
<feature type="transmembrane region" description="Helical" evidence="1">
    <location>
        <begin position="196"/>
        <end position="216"/>
    </location>
</feature>
<feature type="transmembrane region" description="Helical" evidence="1">
    <location>
        <begin position="225"/>
        <end position="245"/>
    </location>
</feature>
<feature type="binding site" evidence="1">
    <location>
        <position position="130"/>
    </location>
    <ligand>
        <name>a 1,2-diacyl-sn-glycero-3-phospho-(1'-sn-glycerol)</name>
        <dbReference type="ChEBI" id="CHEBI:64716"/>
    </ligand>
</feature>
<organism>
    <name type="scientific">Clostridium novyi (strain NT)</name>
    <dbReference type="NCBI Taxonomy" id="386415"/>
    <lineage>
        <taxon>Bacteria</taxon>
        <taxon>Bacillati</taxon>
        <taxon>Bacillota</taxon>
        <taxon>Clostridia</taxon>
        <taxon>Eubacteriales</taxon>
        <taxon>Clostridiaceae</taxon>
        <taxon>Clostridium</taxon>
    </lineage>
</organism>
<proteinExistence type="inferred from homology"/>
<name>LGT_CLONN</name>
<evidence type="ECO:0000255" key="1">
    <source>
        <dbReference type="HAMAP-Rule" id="MF_01147"/>
    </source>
</evidence>
<comment type="function">
    <text evidence="1">Catalyzes the transfer of the diacylglyceryl group from phosphatidylglycerol to the sulfhydryl group of the N-terminal cysteine of a prolipoprotein, the first step in the formation of mature lipoproteins.</text>
</comment>
<comment type="catalytic activity">
    <reaction evidence="1">
        <text>L-cysteinyl-[prolipoprotein] + a 1,2-diacyl-sn-glycero-3-phospho-(1'-sn-glycerol) = an S-1,2-diacyl-sn-glyceryl-L-cysteinyl-[prolipoprotein] + sn-glycerol 1-phosphate + H(+)</text>
        <dbReference type="Rhea" id="RHEA:56712"/>
        <dbReference type="Rhea" id="RHEA-COMP:14679"/>
        <dbReference type="Rhea" id="RHEA-COMP:14680"/>
        <dbReference type="ChEBI" id="CHEBI:15378"/>
        <dbReference type="ChEBI" id="CHEBI:29950"/>
        <dbReference type="ChEBI" id="CHEBI:57685"/>
        <dbReference type="ChEBI" id="CHEBI:64716"/>
        <dbReference type="ChEBI" id="CHEBI:140658"/>
        <dbReference type="EC" id="2.5.1.145"/>
    </reaction>
</comment>
<comment type="pathway">
    <text evidence="1">Protein modification; lipoprotein biosynthesis (diacylglyceryl transfer).</text>
</comment>
<comment type="subcellular location">
    <subcellularLocation>
        <location evidence="1">Cell membrane</location>
        <topology evidence="1">Multi-pass membrane protein</topology>
    </subcellularLocation>
</comment>
<comment type="similarity">
    <text evidence="1">Belongs to the Lgt family.</text>
</comment>